<proteinExistence type="inferred from homology"/>
<feature type="chain" id="PRO_1000149485" description="2,3-bisphosphoglycerate-independent phosphoglycerate mutase">
    <location>
        <begin position="1"/>
        <end position="540"/>
    </location>
</feature>
<feature type="active site" description="Phosphoserine intermediate" evidence="1">
    <location>
        <position position="63"/>
    </location>
</feature>
<feature type="binding site" evidence="1">
    <location>
        <position position="13"/>
    </location>
    <ligand>
        <name>Mn(2+)</name>
        <dbReference type="ChEBI" id="CHEBI:29035"/>
        <label>2</label>
    </ligand>
</feature>
<feature type="binding site" evidence="1">
    <location>
        <position position="63"/>
    </location>
    <ligand>
        <name>Mn(2+)</name>
        <dbReference type="ChEBI" id="CHEBI:29035"/>
        <label>2</label>
    </ligand>
</feature>
<feature type="binding site" evidence="1">
    <location>
        <position position="124"/>
    </location>
    <ligand>
        <name>substrate</name>
    </ligand>
</feature>
<feature type="binding site" evidence="1">
    <location>
        <begin position="154"/>
        <end position="155"/>
    </location>
    <ligand>
        <name>substrate</name>
    </ligand>
</feature>
<feature type="binding site" evidence="1">
    <location>
        <position position="186"/>
    </location>
    <ligand>
        <name>substrate</name>
    </ligand>
</feature>
<feature type="binding site" evidence="1">
    <location>
        <position position="192"/>
    </location>
    <ligand>
        <name>substrate</name>
    </ligand>
</feature>
<feature type="binding site" evidence="1">
    <location>
        <begin position="262"/>
        <end position="265"/>
    </location>
    <ligand>
        <name>substrate</name>
    </ligand>
</feature>
<feature type="binding site" evidence="1">
    <location>
        <position position="356"/>
    </location>
    <ligand>
        <name>substrate</name>
    </ligand>
</feature>
<feature type="binding site" evidence="1">
    <location>
        <position position="423"/>
    </location>
    <ligand>
        <name>Mn(2+)</name>
        <dbReference type="ChEBI" id="CHEBI:29035"/>
        <label>1</label>
    </ligand>
</feature>
<feature type="binding site" evidence="1">
    <location>
        <position position="427"/>
    </location>
    <ligand>
        <name>Mn(2+)</name>
        <dbReference type="ChEBI" id="CHEBI:29035"/>
        <label>1</label>
    </ligand>
</feature>
<feature type="binding site" evidence="1">
    <location>
        <position position="464"/>
    </location>
    <ligand>
        <name>Mn(2+)</name>
        <dbReference type="ChEBI" id="CHEBI:29035"/>
        <label>2</label>
    </ligand>
</feature>
<feature type="binding site" evidence="1">
    <location>
        <position position="465"/>
    </location>
    <ligand>
        <name>Mn(2+)</name>
        <dbReference type="ChEBI" id="CHEBI:29035"/>
        <label>2</label>
    </ligand>
</feature>
<feature type="binding site" evidence="1">
    <location>
        <position position="483"/>
    </location>
    <ligand>
        <name>Mn(2+)</name>
        <dbReference type="ChEBI" id="CHEBI:29035"/>
        <label>1</label>
    </ligand>
</feature>
<evidence type="ECO:0000255" key="1">
    <source>
        <dbReference type="HAMAP-Rule" id="MF_01038"/>
    </source>
</evidence>
<accession>B8GBF7</accession>
<organism>
    <name type="scientific">Chloroflexus aggregans (strain MD-66 / DSM 9485)</name>
    <dbReference type="NCBI Taxonomy" id="326427"/>
    <lineage>
        <taxon>Bacteria</taxon>
        <taxon>Bacillati</taxon>
        <taxon>Chloroflexota</taxon>
        <taxon>Chloroflexia</taxon>
        <taxon>Chloroflexales</taxon>
        <taxon>Chloroflexineae</taxon>
        <taxon>Chloroflexaceae</taxon>
        <taxon>Chloroflexus</taxon>
    </lineage>
</organism>
<sequence length="540" mass="58745">MTRPRPVVLIIMDGWGVAPPGPGNAADLADTPHVDEWMATCPFTTLGASGLDVGLPEGQIGNSEVGHLNIGAGFIVYQELTRISKAIADGDFFTNPAFLQAIEHVKQHNSALHLMGLFGPGGVHAHEDHLHALLELAHRQQVRRVYLHLFLDGRDVLPRSALGFLDTLEGVIARLGVGVIATVSGRYYAMDRDKRWERTGRAYAALVDGIGERATSARAAIEAAYANDISDEFVLPTVIVDAHGTPVATVRDGDAVIFTNFRPDRGRQLTRAFVDPDLNERIRQHYERQKAEGQPLPPQIWQRDRQLHDLCFVTMTQYEEGLPVLVAFPPRYVTTPLAAVISQAGMRQFHIAETEKYPHVTFFLNGGREEPFPGEDRRLIPSPKVATYDLKPEMSAPEVTEALLQAITSDQYDFIVVNYANPDMVGHTGSIPAVIKACEAVDAGLARVVPAILERGGVALVIADHGNAEQMIDPETGGPHTAHTTNPAPCFLIGGPGYGKDTIRLRSGGRLADVAPTLLELLELTPPADMTGQSLIVRNL</sequence>
<reference key="1">
    <citation type="submission" date="2008-12" db="EMBL/GenBank/DDBJ databases">
        <title>Complete sequence of Chloroflexus aggregans DSM 9485.</title>
        <authorList>
            <consortium name="US DOE Joint Genome Institute"/>
            <person name="Lucas S."/>
            <person name="Copeland A."/>
            <person name="Lapidus A."/>
            <person name="Glavina del Rio T."/>
            <person name="Dalin E."/>
            <person name="Tice H."/>
            <person name="Pitluck S."/>
            <person name="Foster B."/>
            <person name="Larimer F."/>
            <person name="Land M."/>
            <person name="Hauser L."/>
            <person name="Kyrpides N."/>
            <person name="Mikhailova N."/>
            <person name="Bryant D.A."/>
            <person name="Richardson P."/>
        </authorList>
    </citation>
    <scope>NUCLEOTIDE SEQUENCE [LARGE SCALE GENOMIC DNA]</scope>
    <source>
        <strain>MD-66 / DSM 9485</strain>
    </source>
</reference>
<dbReference type="EC" id="5.4.2.12" evidence="1"/>
<dbReference type="EMBL" id="CP001337">
    <property type="protein sequence ID" value="ACL24785.1"/>
    <property type="molecule type" value="Genomic_DNA"/>
</dbReference>
<dbReference type="RefSeq" id="WP_015940644.1">
    <property type="nucleotide sequence ID" value="NC_011831.1"/>
</dbReference>
<dbReference type="SMR" id="B8GBF7"/>
<dbReference type="STRING" id="326427.Cagg_1890"/>
<dbReference type="KEGG" id="cag:Cagg_1890"/>
<dbReference type="eggNOG" id="COG0696">
    <property type="taxonomic scope" value="Bacteria"/>
</dbReference>
<dbReference type="HOGENOM" id="CLU_026099_2_0_0"/>
<dbReference type="OrthoDB" id="9800863at2"/>
<dbReference type="UniPathway" id="UPA00109">
    <property type="reaction ID" value="UER00186"/>
</dbReference>
<dbReference type="Proteomes" id="UP000002508">
    <property type="component" value="Chromosome"/>
</dbReference>
<dbReference type="GO" id="GO:0005829">
    <property type="term" value="C:cytosol"/>
    <property type="evidence" value="ECO:0007669"/>
    <property type="project" value="TreeGrafter"/>
</dbReference>
<dbReference type="GO" id="GO:0030145">
    <property type="term" value="F:manganese ion binding"/>
    <property type="evidence" value="ECO:0007669"/>
    <property type="project" value="UniProtKB-UniRule"/>
</dbReference>
<dbReference type="GO" id="GO:0004619">
    <property type="term" value="F:phosphoglycerate mutase activity"/>
    <property type="evidence" value="ECO:0007669"/>
    <property type="project" value="UniProtKB-EC"/>
</dbReference>
<dbReference type="GO" id="GO:0006007">
    <property type="term" value="P:glucose catabolic process"/>
    <property type="evidence" value="ECO:0007669"/>
    <property type="project" value="InterPro"/>
</dbReference>
<dbReference type="GO" id="GO:0006096">
    <property type="term" value="P:glycolytic process"/>
    <property type="evidence" value="ECO:0007669"/>
    <property type="project" value="UniProtKB-UniRule"/>
</dbReference>
<dbReference type="CDD" id="cd16010">
    <property type="entry name" value="iPGM"/>
    <property type="match status" value="1"/>
</dbReference>
<dbReference type="FunFam" id="3.40.1450.10:FF:000001">
    <property type="entry name" value="2,3-bisphosphoglycerate-independent phosphoglycerate mutase"/>
    <property type="match status" value="1"/>
</dbReference>
<dbReference type="Gene3D" id="3.40.720.10">
    <property type="entry name" value="Alkaline Phosphatase, subunit A"/>
    <property type="match status" value="1"/>
</dbReference>
<dbReference type="Gene3D" id="3.40.1450.10">
    <property type="entry name" value="BPG-independent phosphoglycerate mutase, domain B"/>
    <property type="match status" value="1"/>
</dbReference>
<dbReference type="HAMAP" id="MF_01038">
    <property type="entry name" value="GpmI"/>
    <property type="match status" value="1"/>
</dbReference>
<dbReference type="InterPro" id="IPR017850">
    <property type="entry name" value="Alkaline_phosphatase_core_sf"/>
</dbReference>
<dbReference type="InterPro" id="IPR011258">
    <property type="entry name" value="BPG-indep_PGM_N"/>
</dbReference>
<dbReference type="InterPro" id="IPR006124">
    <property type="entry name" value="Metalloenzyme"/>
</dbReference>
<dbReference type="InterPro" id="IPR036646">
    <property type="entry name" value="PGAM_B_sf"/>
</dbReference>
<dbReference type="InterPro" id="IPR005995">
    <property type="entry name" value="Pgm_bpd_ind"/>
</dbReference>
<dbReference type="NCBIfam" id="TIGR01307">
    <property type="entry name" value="pgm_bpd_ind"/>
    <property type="match status" value="1"/>
</dbReference>
<dbReference type="PANTHER" id="PTHR31637">
    <property type="entry name" value="2,3-BISPHOSPHOGLYCERATE-INDEPENDENT PHOSPHOGLYCERATE MUTASE"/>
    <property type="match status" value="1"/>
</dbReference>
<dbReference type="PANTHER" id="PTHR31637:SF0">
    <property type="entry name" value="2,3-BISPHOSPHOGLYCERATE-INDEPENDENT PHOSPHOGLYCERATE MUTASE"/>
    <property type="match status" value="1"/>
</dbReference>
<dbReference type="Pfam" id="PF06415">
    <property type="entry name" value="iPGM_N"/>
    <property type="match status" value="1"/>
</dbReference>
<dbReference type="Pfam" id="PF01676">
    <property type="entry name" value="Metalloenzyme"/>
    <property type="match status" value="1"/>
</dbReference>
<dbReference type="PIRSF" id="PIRSF001492">
    <property type="entry name" value="IPGAM"/>
    <property type="match status" value="1"/>
</dbReference>
<dbReference type="SUPFAM" id="SSF64158">
    <property type="entry name" value="2,3-Bisphosphoglycerate-independent phosphoglycerate mutase, substrate-binding domain"/>
    <property type="match status" value="1"/>
</dbReference>
<dbReference type="SUPFAM" id="SSF53649">
    <property type="entry name" value="Alkaline phosphatase-like"/>
    <property type="match status" value="1"/>
</dbReference>
<protein>
    <recommendedName>
        <fullName evidence="1">2,3-bisphosphoglycerate-independent phosphoglycerate mutase</fullName>
        <shortName evidence="1">BPG-independent PGAM</shortName>
        <shortName evidence="1">Phosphoglyceromutase</shortName>
        <shortName evidence="1">iPGM</shortName>
        <ecNumber evidence="1">5.4.2.12</ecNumber>
    </recommendedName>
</protein>
<comment type="function">
    <text evidence="1">Catalyzes the interconversion of 2-phosphoglycerate and 3-phosphoglycerate.</text>
</comment>
<comment type="catalytic activity">
    <reaction evidence="1">
        <text>(2R)-2-phosphoglycerate = (2R)-3-phosphoglycerate</text>
        <dbReference type="Rhea" id="RHEA:15901"/>
        <dbReference type="ChEBI" id="CHEBI:58272"/>
        <dbReference type="ChEBI" id="CHEBI:58289"/>
        <dbReference type="EC" id="5.4.2.12"/>
    </reaction>
</comment>
<comment type="cofactor">
    <cofactor evidence="1">
        <name>Mn(2+)</name>
        <dbReference type="ChEBI" id="CHEBI:29035"/>
    </cofactor>
    <text evidence="1">Binds 2 manganese ions per subunit.</text>
</comment>
<comment type="pathway">
    <text evidence="1">Carbohydrate degradation; glycolysis; pyruvate from D-glyceraldehyde 3-phosphate: step 3/5.</text>
</comment>
<comment type="subunit">
    <text evidence="1">Monomer.</text>
</comment>
<comment type="similarity">
    <text evidence="1">Belongs to the BPG-independent phosphoglycerate mutase family.</text>
</comment>
<gene>
    <name evidence="1" type="primary">gpmI</name>
    <name type="ordered locus">Cagg_1890</name>
</gene>
<keyword id="KW-0324">Glycolysis</keyword>
<keyword id="KW-0413">Isomerase</keyword>
<keyword id="KW-0464">Manganese</keyword>
<keyword id="KW-0479">Metal-binding</keyword>
<name>GPMI_CHLAD</name>